<keyword id="KW-0143">Chaperone</keyword>
<keyword id="KW-0963">Cytoplasm</keyword>
<keyword id="KW-0996">Nickel insertion</keyword>
<proteinExistence type="inferred from homology"/>
<dbReference type="EMBL" id="AF056321">
    <property type="protein sequence ID" value="AAD13736.1"/>
    <property type="molecule type" value="Genomic_DNA"/>
</dbReference>
<dbReference type="EMBL" id="AF048781">
    <property type="protein sequence ID" value="AAD13726.1"/>
    <property type="molecule type" value="Genomic_DNA"/>
</dbReference>
<dbReference type="RefSeq" id="WP_003781997.1">
    <property type="nucleotide sequence ID" value="NZ_MSRU01000006.1"/>
</dbReference>
<dbReference type="SMR" id="Q9Z364"/>
<dbReference type="STRING" id="1655.BKH10_09530"/>
<dbReference type="GO" id="GO:0005737">
    <property type="term" value="C:cytoplasm"/>
    <property type="evidence" value="ECO:0007669"/>
    <property type="project" value="UniProtKB-SubCell"/>
</dbReference>
<dbReference type="GO" id="GO:0016151">
    <property type="term" value="F:nickel cation binding"/>
    <property type="evidence" value="ECO:0007669"/>
    <property type="project" value="UniProtKB-UniRule"/>
</dbReference>
<dbReference type="HAMAP" id="MF_01384">
    <property type="entry name" value="UreD"/>
    <property type="match status" value="1"/>
</dbReference>
<dbReference type="InterPro" id="IPR002669">
    <property type="entry name" value="UreD"/>
</dbReference>
<dbReference type="PANTHER" id="PTHR33643">
    <property type="entry name" value="UREASE ACCESSORY PROTEIN D"/>
    <property type="match status" value="1"/>
</dbReference>
<dbReference type="PANTHER" id="PTHR33643:SF1">
    <property type="entry name" value="UREASE ACCESSORY PROTEIN D"/>
    <property type="match status" value="1"/>
</dbReference>
<dbReference type="Pfam" id="PF01774">
    <property type="entry name" value="UreD"/>
    <property type="match status" value="1"/>
</dbReference>
<comment type="function">
    <text evidence="1">Required for maturation of urease via the functional incorporation of the urease nickel metallocenter.</text>
</comment>
<comment type="subunit">
    <text evidence="1">UreD, UreF and UreG form a complex that acts as a GTP-hydrolysis-dependent molecular chaperone, activating the urease apoprotein by helping to assemble the nickel containing metallocenter of UreC. The UreE protein probably delivers the nickel.</text>
</comment>
<comment type="subcellular location">
    <subcellularLocation>
        <location evidence="1">Cytoplasm</location>
    </subcellularLocation>
</comment>
<comment type="similarity">
    <text evidence="1">Belongs to the UreD family.</text>
</comment>
<gene>
    <name evidence="1" type="primary">ureD</name>
</gene>
<feature type="chain" id="PRO_0000067601" description="Urease accessory protein UreD">
    <location>
        <begin position="1"/>
        <end position="271"/>
    </location>
</feature>
<organism>
    <name type="scientific">Actinomyces naeslundii</name>
    <dbReference type="NCBI Taxonomy" id="1655"/>
    <lineage>
        <taxon>Bacteria</taxon>
        <taxon>Bacillati</taxon>
        <taxon>Actinomycetota</taxon>
        <taxon>Actinomycetes</taxon>
        <taxon>Actinomycetales</taxon>
        <taxon>Actinomycetaceae</taxon>
        <taxon>Actinomyces</taxon>
    </lineage>
</organism>
<evidence type="ECO:0000255" key="1">
    <source>
        <dbReference type="HAMAP-Rule" id="MF_01384"/>
    </source>
</evidence>
<accession>Q9Z364</accession>
<name>URED_ACTNA</name>
<protein>
    <recommendedName>
        <fullName evidence="1">Urease accessory protein UreD</fullName>
    </recommendedName>
</protein>
<reference key="1">
    <citation type="journal article" date="1999" name="Infect. Immun.">
        <title>Genetic and physiologic characterization of urease of Actinomyces naeslundii.</title>
        <authorList>
            <person name="Morou-Bermudez E."/>
            <person name="Burne R.A."/>
        </authorList>
    </citation>
    <scope>NUCLEOTIDE SEQUENCE [GENOMIC DNA]</scope>
    <source>
        <strain>WVU45</strain>
    </source>
</reference>
<sequence>MSTTGELYLRIAQDGDRSIAVDQYHRGALRVFRPLYLDGTGQVAYYVVNPGGGYLDGDSYLTEVEVLQGASAVLTTQAATKIYRTPTRPVRQDTRASLAPGAVLELVPDQVIAYRGASYRQTTLVEMDPTATFMSLEVLTPGWAPDGSAFGYDCVRMRTEIRVGGRCAVVDNLRLVPGEAGMAGLGALEGHSHLASFTALDARIDAALVTEIGELLEVDGVRGAVTRVPGPGLIARALGDDTTRLTALMLDISELLRDRWFGAPRLDLRKY</sequence>